<reference key="1">
    <citation type="journal article" date="2003" name="Proc. Natl. Acad. Sci. U.S.A.">
        <title>Complete genome sequence and analysis of Wolinella succinogenes.</title>
        <authorList>
            <person name="Baar C."/>
            <person name="Eppinger M."/>
            <person name="Raddatz G."/>
            <person name="Simon J."/>
            <person name="Lanz C."/>
            <person name="Klimmek O."/>
            <person name="Nandakumar R."/>
            <person name="Gross R."/>
            <person name="Rosinus A."/>
            <person name="Keller H."/>
            <person name="Jagtap P."/>
            <person name="Linke B."/>
            <person name="Meyer F."/>
            <person name="Lederer H."/>
            <person name="Schuster S.C."/>
        </authorList>
    </citation>
    <scope>NUCLEOTIDE SEQUENCE [LARGE SCALE GENOMIC DNA]</scope>
    <source>
        <strain>ATCC 29543 / DSM 1740 / CCUG 13145 / JCM 31913 / LMG 7466 / NCTC 11488 / FDC 602W</strain>
    </source>
</reference>
<name>RIBB_WOLSU</name>
<accession>Q7M936</accession>
<organism>
    <name type="scientific">Wolinella succinogenes (strain ATCC 29543 / DSM 1740 / CCUG 13145 / JCM 31913 / LMG 7466 / NCTC 11488 / FDC 602W)</name>
    <name type="common">Vibrio succinogenes</name>
    <dbReference type="NCBI Taxonomy" id="273121"/>
    <lineage>
        <taxon>Bacteria</taxon>
        <taxon>Pseudomonadati</taxon>
        <taxon>Campylobacterota</taxon>
        <taxon>Epsilonproteobacteria</taxon>
        <taxon>Campylobacterales</taxon>
        <taxon>Helicobacteraceae</taxon>
        <taxon>Wolinella</taxon>
    </lineage>
</organism>
<evidence type="ECO:0000250" key="1"/>
<evidence type="ECO:0000305" key="2"/>
<comment type="function">
    <text evidence="1">Catalyzes the conversion of D-ribulose 5-phosphate to formate and 3,4-dihydroxy-2-butanone 4-phosphate.</text>
</comment>
<comment type="catalytic activity">
    <reaction>
        <text>D-ribulose 5-phosphate = (2S)-2-hydroxy-3-oxobutyl phosphate + formate + H(+)</text>
        <dbReference type="Rhea" id="RHEA:18457"/>
        <dbReference type="ChEBI" id="CHEBI:15378"/>
        <dbReference type="ChEBI" id="CHEBI:15740"/>
        <dbReference type="ChEBI" id="CHEBI:58121"/>
        <dbReference type="ChEBI" id="CHEBI:58830"/>
        <dbReference type="EC" id="4.1.99.12"/>
    </reaction>
</comment>
<comment type="cofactor">
    <cofactor evidence="1">
        <name>Mg(2+)</name>
        <dbReference type="ChEBI" id="CHEBI:18420"/>
    </cofactor>
    <cofactor evidence="1">
        <name>Mn(2+)</name>
        <dbReference type="ChEBI" id="CHEBI:29035"/>
    </cofactor>
    <text evidence="1">Binds 2 divalent metal cations per subunit. Magnesium or manganese.</text>
</comment>
<comment type="pathway">
    <text>Cofactor biosynthesis; riboflavin biosynthesis; 2-hydroxy-3-oxobutyl phosphate from D-ribulose 5-phosphate: step 1/1.</text>
</comment>
<comment type="similarity">
    <text evidence="2">In the N-terminal section; belongs to the DHBP synthase family.</text>
</comment>
<comment type="similarity">
    <text evidence="2">In the C-terminal section; belongs to the GTP cyclohydrolase II family.</text>
</comment>
<keyword id="KW-0456">Lyase</keyword>
<keyword id="KW-0460">Magnesium</keyword>
<keyword id="KW-0464">Manganese</keyword>
<keyword id="KW-0479">Metal-binding</keyword>
<keyword id="KW-1185">Reference proteome</keyword>
<keyword id="KW-0686">Riboflavin biosynthesis</keyword>
<feature type="chain" id="PRO_0000151745" description="3,4-dihydroxy-2-butanone 4-phosphate synthase">
    <location>
        <begin position="1"/>
        <end position="347"/>
    </location>
</feature>
<feature type="region of interest" description="DHBP synthase">
    <location>
        <begin position="1"/>
        <end position="200"/>
    </location>
</feature>
<feature type="region of interest" description="GTP cyclohydrolase II-like">
    <location>
        <begin position="201"/>
        <end position="347"/>
    </location>
</feature>
<feature type="binding site" evidence="1">
    <location>
        <begin position="27"/>
        <end position="28"/>
    </location>
    <ligand>
        <name>D-ribulose 5-phosphate</name>
        <dbReference type="ChEBI" id="CHEBI:58121"/>
    </ligand>
</feature>
<feature type="binding site" evidence="1">
    <location>
        <position position="28"/>
    </location>
    <ligand>
        <name>Mg(2+)</name>
        <dbReference type="ChEBI" id="CHEBI:18420"/>
        <label>1</label>
    </ligand>
</feature>
<feature type="binding site" evidence="1">
    <location>
        <position position="28"/>
    </location>
    <ligand>
        <name>Mg(2+)</name>
        <dbReference type="ChEBI" id="CHEBI:18420"/>
        <label>2</label>
    </ligand>
</feature>
<feature type="binding site" evidence="1">
    <location>
        <position position="32"/>
    </location>
    <ligand>
        <name>D-ribulose 5-phosphate</name>
        <dbReference type="ChEBI" id="CHEBI:58121"/>
    </ligand>
</feature>
<feature type="binding site" evidence="1">
    <location>
        <begin position="139"/>
        <end position="143"/>
    </location>
    <ligand>
        <name>D-ribulose 5-phosphate</name>
        <dbReference type="ChEBI" id="CHEBI:58121"/>
    </ligand>
</feature>
<feature type="binding site" evidence="1">
    <location>
        <position position="142"/>
    </location>
    <ligand>
        <name>Mg(2+)</name>
        <dbReference type="ChEBI" id="CHEBI:18420"/>
        <label>2</label>
    </ligand>
</feature>
<feature type="binding site" evidence="1">
    <location>
        <position position="163"/>
    </location>
    <ligand>
        <name>D-ribulose 5-phosphate</name>
        <dbReference type="ChEBI" id="CHEBI:58121"/>
    </ligand>
</feature>
<feature type="site" description="Essential for catalytic activity" evidence="1">
    <location>
        <position position="125"/>
    </location>
</feature>
<feature type="site" description="Essential for catalytic activity" evidence="1">
    <location>
        <position position="163"/>
    </location>
</feature>
<proteinExistence type="inferred from homology"/>
<dbReference type="EC" id="4.1.99.12"/>
<dbReference type="EMBL" id="BX571660">
    <property type="protein sequence ID" value="CAE10303.1"/>
    <property type="molecule type" value="Genomic_DNA"/>
</dbReference>
<dbReference type="RefSeq" id="WP_011139091.1">
    <property type="nucleotide sequence ID" value="NC_005090.1"/>
</dbReference>
<dbReference type="SMR" id="Q7M936"/>
<dbReference type="STRING" id="273121.WS1222"/>
<dbReference type="KEGG" id="wsu:WS1222"/>
<dbReference type="eggNOG" id="COG0108">
    <property type="taxonomic scope" value="Bacteria"/>
</dbReference>
<dbReference type="eggNOG" id="COG0807">
    <property type="taxonomic scope" value="Bacteria"/>
</dbReference>
<dbReference type="HOGENOM" id="CLU_020273_1_2_7"/>
<dbReference type="UniPathway" id="UPA00275">
    <property type="reaction ID" value="UER00399"/>
</dbReference>
<dbReference type="Proteomes" id="UP000000422">
    <property type="component" value="Chromosome"/>
</dbReference>
<dbReference type="GO" id="GO:0005829">
    <property type="term" value="C:cytosol"/>
    <property type="evidence" value="ECO:0007669"/>
    <property type="project" value="TreeGrafter"/>
</dbReference>
<dbReference type="GO" id="GO:0008686">
    <property type="term" value="F:3,4-dihydroxy-2-butanone-4-phosphate synthase activity"/>
    <property type="evidence" value="ECO:0007669"/>
    <property type="project" value="UniProtKB-UniRule"/>
</dbReference>
<dbReference type="GO" id="GO:0003935">
    <property type="term" value="F:GTP cyclohydrolase II activity"/>
    <property type="evidence" value="ECO:0007669"/>
    <property type="project" value="TreeGrafter"/>
</dbReference>
<dbReference type="GO" id="GO:0000287">
    <property type="term" value="F:magnesium ion binding"/>
    <property type="evidence" value="ECO:0007669"/>
    <property type="project" value="UniProtKB-UniRule"/>
</dbReference>
<dbReference type="GO" id="GO:0030145">
    <property type="term" value="F:manganese ion binding"/>
    <property type="evidence" value="ECO:0007669"/>
    <property type="project" value="UniProtKB-UniRule"/>
</dbReference>
<dbReference type="GO" id="GO:0009231">
    <property type="term" value="P:riboflavin biosynthetic process"/>
    <property type="evidence" value="ECO:0007669"/>
    <property type="project" value="UniProtKB-UniRule"/>
</dbReference>
<dbReference type="FunFam" id="3.90.870.10:FF:000001">
    <property type="entry name" value="Riboflavin biosynthesis protein RibBA"/>
    <property type="match status" value="1"/>
</dbReference>
<dbReference type="Gene3D" id="3.90.870.10">
    <property type="entry name" value="DHBP synthase"/>
    <property type="match status" value="1"/>
</dbReference>
<dbReference type="Gene3D" id="3.40.50.10990">
    <property type="entry name" value="GTP cyclohydrolase II"/>
    <property type="match status" value="1"/>
</dbReference>
<dbReference type="HAMAP" id="MF_00180">
    <property type="entry name" value="RibB"/>
    <property type="match status" value="1"/>
</dbReference>
<dbReference type="InterPro" id="IPR017945">
    <property type="entry name" value="DHBP_synth_RibB-like_a/b_dom"/>
</dbReference>
<dbReference type="InterPro" id="IPR000422">
    <property type="entry name" value="DHBP_synthase_RibB"/>
</dbReference>
<dbReference type="InterPro" id="IPR032677">
    <property type="entry name" value="GTP_cyclohydro_II"/>
</dbReference>
<dbReference type="InterPro" id="IPR036144">
    <property type="entry name" value="RibA-like_sf"/>
</dbReference>
<dbReference type="NCBIfam" id="NF006804">
    <property type="entry name" value="PRK09314.1"/>
    <property type="match status" value="1"/>
</dbReference>
<dbReference type="NCBIfam" id="TIGR00506">
    <property type="entry name" value="ribB"/>
    <property type="match status" value="1"/>
</dbReference>
<dbReference type="PANTHER" id="PTHR21327:SF18">
    <property type="entry name" value="3,4-DIHYDROXY-2-BUTANONE 4-PHOSPHATE SYNTHASE"/>
    <property type="match status" value="1"/>
</dbReference>
<dbReference type="PANTHER" id="PTHR21327">
    <property type="entry name" value="GTP CYCLOHYDROLASE II-RELATED"/>
    <property type="match status" value="1"/>
</dbReference>
<dbReference type="Pfam" id="PF00926">
    <property type="entry name" value="DHBP_synthase"/>
    <property type="match status" value="1"/>
</dbReference>
<dbReference type="Pfam" id="PF00925">
    <property type="entry name" value="GTP_cyclohydro2"/>
    <property type="match status" value="1"/>
</dbReference>
<dbReference type="PIRSF" id="PIRSF001259">
    <property type="entry name" value="RibA"/>
    <property type="match status" value="1"/>
</dbReference>
<dbReference type="SUPFAM" id="SSF142695">
    <property type="entry name" value="RibA-like"/>
    <property type="match status" value="1"/>
</dbReference>
<dbReference type="SUPFAM" id="SSF55821">
    <property type="entry name" value="YrdC/RibB"/>
    <property type="match status" value="1"/>
</dbReference>
<protein>
    <recommendedName>
        <fullName>3,4-dihydroxy-2-butanone 4-phosphate synthase</fullName>
        <shortName>DHBP synthase</shortName>
        <ecNumber>4.1.99.12</ecNumber>
    </recommendedName>
</protein>
<sequence length="347" mass="39113">MPLNRVREAIEAIKKGEMIIMMDDEDRENEGDLVYAAAFSTPEKVNFMVSEAKGLVCVCVTSTCSDRLGLAPMVRENNSQHETAFTVSIDARECSTGISAFERDLTIRKMVDGTSKPEDFVRPGHIFPLIAKEGGVLVRTGHTEGSVDICKLAGVAPVAVICEIIKKDGHMARRDDLMEFAKEHHLKIVYISDLIEYRMQNEMLILIKERSEVEFLGKRAERYVFQDHHRREHTLYAFGKIIDNSLVKYHTVGKDLSLLESEKKYSTLMQAIKKIQEENGLIIFMDTPQNAAPQIKDFGIGAQMLRFLGIKNFRLLTSEENREYVGLSGFGLNVTEKIVLQGGPIQL</sequence>
<gene>
    <name type="primary">ribB</name>
    <name type="ordered locus">WS1222</name>
</gene>